<organism>
    <name type="scientific">Shewanella halifaxensis (strain HAW-EB4)</name>
    <dbReference type="NCBI Taxonomy" id="458817"/>
    <lineage>
        <taxon>Bacteria</taxon>
        <taxon>Pseudomonadati</taxon>
        <taxon>Pseudomonadota</taxon>
        <taxon>Gammaproteobacteria</taxon>
        <taxon>Alteromonadales</taxon>
        <taxon>Shewanellaceae</taxon>
        <taxon>Shewanella</taxon>
    </lineage>
</organism>
<gene>
    <name evidence="1" type="primary">hslU</name>
    <name type="ordered locus">Shal_3867</name>
</gene>
<proteinExistence type="inferred from homology"/>
<reference key="1">
    <citation type="submission" date="2008-01" db="EMBL/GenBank/DDBJ databases">
        <title>Complete sequence of Shewanella halifaxensis HAW-EB4.</title>
        <authorList>
            <consortium name="US DOE Joint Genome Institute"/>
            <person name="Copeland A."/>
            <person name="Lucas S."/>
            <person name="Lapidus A."/>
            <person name="Glavina del Rio T."/>
            <person name="Dalin E."/>
            <person name="Tice H."/>
            <person name="Bruce D."/>
            <person name="Goodwin L."/>
            <person name="Pitluck S."/>
            <person name="Sims D."/>
            <person name="Brettin T."/>
            <person name="Detter J.C."/>
            <person name="Han C."/>
            <person name="Kuske C.R."/>
            <person name="Schmutz J."/>
            <person name="Larimer F."/>
            <person name="Land M."/>
            <person name="Hauser L."/>
            <person name="Kyrpides N."/>
            <person name="Kim E."/>
            <person name="Zhao J.-S."/>
            <person name="Richardson P."/>
        </authorList>
    </citation>
    <scope>NUCLEOTIDE SEQUENCE [LARGE SCALE GENOMIC DNA]</scope>
    <source>
        <strain>HAW-EB4</strain>
    </source>
</reference>
<feature type="chain" id="PRO_1000078455" description="ATP-dependent protease ATPase subunit HslU">
    <location>
        <begin position="1"/>
        <end position="441"/>
    </location>
</feature>
<feature type="binding site" evidence="1">
    <location>
        <position position="18"/>
    </location>
    <ligand>
        <name>ATP</name>
        <dbReference type="ChEBI" id="CHEBI:30616"/>
    </ligand>
</feature>
<feature type="binding site" evidence="1">
    <location>
        <begin position="60"/>
        <end position="65"/>
    </location>
    <ligand>
        <name>ATP</name>
        <dbReference type="ChEBI" id="CHEBI:30616"/>
    </ligand>
</feature>
<feature type="binding site" evidence="1">
    <location>
        <position position="254"/>
    </location>
    <ligand>
        <name>ATP</name>
        <dbReference type="ChEBI" id="CHEBI:30616"/>
    </ligand>
</feature>
<feature type="binding site" evidence="1">
    <location>
        <position position="319"/>
    </location>
    <ligand>
        <name>ATP</name>
        <dbReference type="ChEBI" id="CHEBI:30616"/>
    </ligand>
</feature>
<feature type="binding site" evidence="1">
    <location>
        <position position="391"/>
    </location>
    <ligand>
        <name>ATP</name>
        <dbReference type="ChEBI" id="CHEBI:30616"/>
    </ligand>
</feature>
<name>HSLU_SHEHH</name>
<dbReference type="EMBL" id="CP000931">
    <property type="protein sequence ID" value="ABZ78407.1"/>
    <property type="molecule type" value="Genomic_DNA"/>
</dbReference>
<dbReference type="RefSeq" id="WP_012278924.1">
    <property type="nucleotide sequence ID" value="NC_010334.1"/>
</dbReference>
<dbReference type="SMR" id="B0TVV4"/>
<dbReference type="STRING" id="458817.Shal_3867"/>
<dbReference type="KEGG" id="shl:Shal_3867"/>
<dbReference type="eggNOG" id="COG1220">
    <property type="taxonomic scope" value="Bacteria"/>
</dbReference>
<dbReference type="HOGENOM" id="CLU_033123_0_0_6"/>
<dbReference type="OrthoDB" id="9804062at2"/>
<dbReference type="Proteomes" id="UP000001317">
    <property type="component" value="Chromosome"/>
</dbReference>
<dbReference type="GO" id="GO:0009376">
    <property type="term" value="C:HslUV protease complex"/>
    <property type="evidence" value="ECO:0007669"/>
    <property type="project" value="UniProtKB-UniRule"/>
</dbReference>
<dbReference type="GO" id="GO:0005524">
    <property type="term" value="F:ATP binding"/>
    <property type="evidence" value="ECO:0007669"/>
    <property type="project" value="UniProtKB-UniRule"/>
</dbReference>
<dbReference type="GO" id="GO:0016887">
    <property type="term" value="F:ATP hydrolysis activity"/>
    <property type="evidence" value="ECO:0007669"/>
    <property type="project" value="InterPro"/>
</dbReference>
<dbReference type="GO" id="GO:0008233">
    <property type="term" value="F:peptidase activity"/>
    <property type="evidence" value="ECO:0007669"/>
    <property type="project" value="InterPro"/>
</dbReference>
<dbReference type="GO" id="GO:0036402">
    <property type="term" value="F:proteasome-activating activity"/>
    <property type="evidence" value="ECO:0007669"/>
    <property type="project" value="UniProtKB-UniRule"/>
</dbReference>
<dbReference type="GO" id="GO:0043335">
    <property type="term" value="P:protein unfolding"/>
    <property type="evidence" value="ECO:0007669"/>
    <property type="project" value="UniProtKB-UniRule"/>
</dbReference>
<dbReference type="GO" id="GO:0051603">
    <property type="term" value="P:proteolysis involved in protein catabolic process"/>
    <property type="evidence" value="ECO:0007669"/>
    <property type="project" value="TreeGrafter"/>
</dbReference>
<dbReference type="CDD" id="cd19498">
    <property type="entry name" value="RecA-like_HslU"/>
    <property type="match status" value="1"/>
</dbReference>
<dbReference type="FunFam" id="1.10.8.10:FF:000028">
    <property type="entry name" value="ATP-dependent protease ATPase subunit HslU"/>
    <property type="match status" value="1"/>
</dbReference>
<dbReference type="FunFam" id="1.10.8.60:FF:000027">
    <property type="entry name" value="ATP-dependent protease ATPase subunit HslU"/>
    <property type="match status" value="1"/>
</dbReference>
<dbReference type="FunFam" id="3.40.50.300:FF:000213">
    <property type="entry name" value="ATP-dependent protease ATPase subunit HslU"/>
    <property type="match status" value="1"/>
</dbReference>
<dbReference type="FunFam" id="3.40.50.300:FF:000220">
    <property type="entry name" value="ATP-dependent protease ATPase subunit HslU"/>
    <property type="match status" value="1"/>
</dbReference>
<dbReference type="Gene3D" id="1.10.8.60">
    <property type="match status" value="1"/>
</dbReference>
<dbReference type="Gene3D" id="3.40.50.300">
    <property type="entry name" value="P-loop containing nucleotide triphosphate hydrolases"/>
    <property type="match status" value="2"/>
</dbReference>
<dbReference type="HAMAP" id="MF_00249">
    <property type="entry name" value="HslU"/>
    <property type="match status" value="1"/>
</dbReference>
<dbReference type="InterPro" id="IPR003593">
    <property type="entry name" value="AAA+_ATPase"/>
</dbReference>
<dbReference type="InterPro" id="IPR050052">
    <property type="entry name" value="ATP-dep_Clp_protease_ClpX"/>
</dbReference>
<dbReference type="InterPro" id="IPR003959">
    <property type="entry name" value="ATPase_AAA_core"/>
</dbReference>
<dbReference type="InterPro" id="IPR019489">
    <property type="entry name" value="Clp_ATPase_C"/>
</dbReference>
<dbReference type="InterPro" id="IPR004491">
    <property type="entry name" value="HslU"/>
</dbReference>
<dbReference type="InterPro" id="IPR027417">
    <property type="entry name" value="P-loop_NTPase"/>
</dbReference>
<dbReference type="NCBIfam" id="TIGR00390">
    <property type="entry name" value="hslU"/>
    <property type="match status" value="1"/>
</dbReference>
<dbReference type="NCBIfam" id="NF003544">
    <property type="entry name" value="PRK05201.1"/>
    <property type="match status" value="1"/>
</dbReference>
<dbReference type="PANTHER" id="PTHR48102">
    <property type="entry name" value="ATP-DEPENDENT CLP PROTEASE ATP-BINDING SUBUNIT CLPX-LIKE, MITOCHONDRIAL-RELATED"/>
    <property type="match status" value="1"/>
</dbReference>
<dbReference type="PANTHER" id="PTHR48102:SF3">
    <property type="entry name" value="ATP-DEPENDENT PROTEASE ATPASE SUBUNIT HSLU"/>
    <property type="match status" value="1"/>
</dbReference>
<dbReference type="Pfam" id="PF00004">
    <property type="entry name" value="AAA"/>
    <property type="match status" value="1"/>
</dbReference>
<dbReference type="Pfam" id="PF07724">
    <property type="entry name" value="AAA_2"/>
    <property type="match status" value="1"/>
</dbReference>
<dbReference type="SMART" id="SM00382">
    <property type="entry name" value="AAA"/>
    <property type="match status" value="1"/>
</dbReference>
<dbReference type="SMART" id="SM01086">
    <property type="entry name" value="ClpB_D2-small"/>
    <property type="match status" value="1"/>
</dbReference>
<dbReference type="SUPFAM" id="SSF52540">
    <property type="entry name" value="P-loop containing nucleoside triphosphate hydrolases"/>
    <property type="match status" value="1"/>
</dbReference>
<protein>
    <recommendedName>
        <fullName evidence="1">ATP-dependent protease ATPase subunit HslU</fullName>
    </recommendedName>
    <alternativeName>
        <fullName evidence="1">Unfoldase HslU</fullName>
    </alternativeName>
</protein>
<keyword id="KW-0067">ATP-binding</keyword>
<keyword id="KW-0143">Chaperone</keyword>
<keyword id="KW-0963">Cytoplasm</keyword>
<keyword id="KW-0547">Nucleotide-binding</keyword>
<keyword id="KW-0346">Stress response</keyword>
<comment type="function">
    <text evidence="1">ATPase subunit of a proteasome-like degradation complex; this subunit has chaperone activity. The binding of ATP and its subsequent hydrolysis by HslU are essential for unfolding of protein substrates subsequently hydrolyzed by HslV. HslU recognizes the N-terminal part of its protein substrates and unfolds these before they are guided to HslV for hydrolysis.</text>
</comment>
<comment type="subunit">
    <text evidence="1">A double ring-shaped homohexamer of HslV is capped on each side by a ring-shaped HslU homohexamer. The assembly of the HslU/HslV complex is dependent on binding of ATP.</text>
</comment>
<comment type="subcellular location">
    <subcellularLocation>
        <location evidence="1">Cytoplasm</location>
    </subcellularLocation>
</comment>
<comment type="similarity">
    <text evidence="1">Belongs to the ClpX chaperone family. HslU subfamily.</text>
</comment>
<evidence type="ECO:0000255" key="1">
    <source>
        <dbReference type="HAMAP-Rule" id="MF_00249"/>
    </source>
</evidence>
<sequence>MSEMTPREIVHELDSHIIGQQKAKRSVAIALRNRWRRMQLAADLRQEVTPKNILMIGPTGVGKTEIARRLARLAKAPFIKVEATKFTEVGYVGKEVEQIIRDLTDSAIKLTREEQIKKCKFRAEEAAEERILDALLPKPKEDWDSEKSDGSATRQIFRKKLREGQLDDKEIEIDVSAPQAGIEIMSPPGMEEMTNQLQSMFQNMGPGASKRRKMPIKEAYKLLIEEEASKLINQEDLKEQAIELVEQHGIVFLDEIDKICKRGESSGPDVSREGVQRDLLPLVEGCTVNTKHGMVKTDHILFIASGAFQMSKPSDLIPELQGRLPIRVELDALSAGDFKRILTEPHASLTEQYIALMGTEGVTIEFTEDGIDSIAEAAWQVNERTENIGARRLHTVMERLMEELSFEASDKSGSVTVIDAAYVKASLDNLVQDEDLSRYIL</sequence>
<accession>B0TVV4</accession>